<keyword id="KW-0002">3D-structure</keyword>
<keyword id="KW-0025">Alternative splicing</keyword>
<keyword id="KW-0130">Cell adhesion</keyword>
<keyword id="KW-0965">Cell junction</keyword>
<keyword id="KW-0963">Cytoplasm</keyword>
<keyword id="KW-0206">Cytoskeleton</keyword>
<keyword id="KW-0597">Phosphoprotein</keyword>
<keyword id="KW-1267">Proteomics identification</keyword>
<keyword id="KW-1185">Reference proteome</keyword>
<keyword id="KW-0728">SH3 domain</keyword>
<proteinExistence type="evidence at protein level"/>
<comment type="function">
    <text evidence="4">Docking protein that plays a role in tyrosine kinase-based signaling related to cell adhesion and cell spreading. Regulates PTK2/FAK1 activity, focal adhesion integrity, and cell spreading.</text>
</comment>
<comment type="subunit">
    <text evidence="4">Interacts (via SH3 domain) with PTK2/FAK1 (via C-terminus).</text>
</comment>
<comment type="interaction">
    <interactant intactId="EBI-12270182">
        <id>Q9NQ75-2</id>
    </interactant>
    <interactant intactId="EBI-17714371">
        <id>Q7Z6G8-3</id>
        <label>ANKS1B</label>
    </interactant>
    <organismsDiffer>false</organismsDiffer>
    <experiments>3</experiments>
</comment>
<comment type="interaction">
    <interactant intactId="EBI-12270182">
        <id>Q9NQ75-2</id>
    </interactant>
    <interactant intactId="EBI-3438291">
        <id>O14613</id>
        <label>CDC42EP2</label>
    </interactant>
    <organismsDiffer>false</organismsDiffer>
    <experiments>4</experiments>
</comment>
<comment type="interaction">
    <interactant intactId="EBI-12270182">
        <id>Q9NQ75-2</id>
    </interactant>
    <interactant intactId="EBI-741101">
        <id>Q13643</id>
        <label>FHL3</label>
    </interactant>
    <organismsDiffer>false</organismsDiffer>
    <experiments>5</experiments>
</comment>
<comment type="interaction">
    <interactant intactId="EBI-12270182">
        <id>Q9NQ75-2</id>
    </interactant>
    <interactant intactId="EBI-618309">
        <id>Q08379</id>
        <label>GOLGA2</label>
    </interactant>
    <organismsDiffer>false</organismsDiffer>
    <experiments>3</experiments>
</comment>
<comment type="interaction">
    <interactant intactId="EBI-12270182">
        <id>Q9NQ75-2</id>
    </interactant>
    <interactant intactId="EBI-7116203">
        <id>O75031</id>
        <label>HSF2BP</label>
    </interactant>
    <organismsDiffer>false</organismsDiffer>
    <experiments>3</experiments>
</comment>
<comment type="interaction">
    <interactant intactId="EBI-12270182">
        <id>Q9NQ75-2</id>
    </interactant>
    <interactant intactId="EBI-7153876">
        <id>Q8TDZ2</id>
        <label>MICAL1</label>
    </interactant>
    <organismsDiffer>false</organismsDiffer>
    <experiments>2</experiments>
</comment>
<comment type="interaction">
    <interactant intactId="EBI-12270182">
        <id>Q9NQ75-2</id>
    </interactant>
    <interactant intactId="EBI-444225">
        <id>Q15942</id>
        <label>ZYX</label>
    </interactant>
    <organismsDiffer>false</organismsDiffer>
    <experiments>4</experiments>
</comment>
<comment type="subcellular location">
    <subcellularLocation>
        <location evidence="4">Cytoplasm</location>
        <location evidence="4">Cytoskeleton</location>
    </subcellularLocation>
    <subcellularLocation>
        <location evidence="4">Cell junction</location>
        <location evidence="4">Focal adhesion</location>
    </subcellularLocation>
</comment>
<comment type="alternative products">
    <event type="alternative splicing"/>
    <isoform>
        <id>Q9NQ75-1</id>
        <name>1</name>
        <sequence type="displayed"/>
    </isoform>
    <isoform>
        <id>Q9NQ75-2</id>
        <name>2</name>
        <sequence type="described" ref="VSP_003807"/>
    </isoform>
    <isoform>
        <id>Q9NQ75-3</id>
        <name>3</name>
        <sequence type="described" ref="VSP_003806"/>
    </isoform>
    <text>Experimental confirmation may be lacking for some isoforms.</text>
</comment>
<comment type="tissue specificity">
    <text evidence="4">Expressed abundantly in lung and spleen. Also highly expressed in ovarian and leukemia cell lines.</text>
</comment>
<comment type="PTM">
    <text evidence="4">Phosphorylated on tyrosines by SRC.</text>
</comment>
<comment type="similarity">
    <text evidence="7">Belongs to the CAS family.</text>
</comment>
<comment type="sequence caution" evidence="7">
    <conflict type="frameshift">
        <sequence resource="EMBL-CDS" id="CAC00655"/>
    </conflict>
</comment>
<reference key="1">
    <citation type="submission" date="2000-03" db="EMBL/GenBank/DDBJ databases">
        <title>HEF-like protein (HEFL) is involved in integrin signalling.</title>
        <authorList>
            <person name="Jahn T."/>
            <person name="Will T."/>
            <person name="Bresolin G."/>
            <person name="Coutinho S."/>
            <person name="Peschel C."/>
            <person name="Duyster J."/>
        </authorList>
    </citation>
    <scope>NUCLEOTIDE SEQUENCE [MRNA] (ISOFORM 1)</scope>
</reference>
<reference key="2">
    <citation type="journal article" date="2004" name="Nat. Genet.">
        <title>Complete sequencing and characterization of 21,243 full-length human cDNAs.</title>
        <authorList>
            <person name="Ota T."/>
            <person name="Suzuki Y."/>
            <person name="Nishikawa T."/>
            <person name="Otsuki T."/>
            <person name="Sugiyama T."/>
            <person name="Irie R."/>
            <person name="Wakamatsu A."/>
            <person name="Hayashi K."/>
            <person name="Sato H."/>
            <person name="Nagai K."/>
            <person name="Kimura K."/>
            <person name="Makita H."/>
            <person name="Sekine M."/>
            <person name="Obayashi M."/>
            <person name="Nishi T."/>
            <person name="Shibahara T."/>
            <person name="Tanaka T."/>
            <person name="Ishii S."/>
            <person name="Yamamoto J."/>
            <person name="Saito K."/>
            <person name="Kawai Y."/>
            <person name="Isono Y."/>
            <person name="Nakamura Y."/>
            <person name="Nagahari K."/>
            <person name="Murakami K."/>
            <person name="Yasuda T."/>
            <person name="Iwayanagi T."/>
            <person name="Wagatsuma M."/>
            <person name="Shiratori A."/>
            <person name="Sudo H."/>
            <person name="Hosoiri T."/>
            <person name="Kaku Y."/>
            <person name="Kodaira H."/>
            <person name="Kondo H."/>
            <person name="Sugawara M."/>
            <person name="Takahashi M."/>
            <person name="Kanda K."/>
            <person name="Yokoi T."/>
            <person name="Furuya T."/>
            <person name="Kikkawa E."/>
            <person name="Omura Y."/>
            <person name="Abe K."/>
            <person name="Kamihara K."/>
            <person name="Katsuta N."/>
            <person name="Sato K."/>
            <person name="Tanikawa M."/>
            <person name="Yamazaki M."/>
            <person name="Ninomiya K."/>
            <person name="Ishibashi T."/>
            <person name="Yamashita H."/>
            <person name="Murakawa K."/>
            <person name="Fujimori K."/>
            <person name="Tanai H."/>
            <person name="Kimata M."/>
            <person name="Watanabe M."/>
            <person name="Hiraoka S."/>
            <person name="Chiba Y."/>
            <person name="Ishida S."/>
            <person name="Ono Y."/>
            <person name="Takiguchi S."/>
            <person name="Watanabe S."/>
            <person name="Yosida M."/>
            <person name="Hotuta T."/>
            <person name="Kusano J."/>
            <person name="Kanehori K."/>
            <person name="Takahashi-Fujii A."/>
            <person name="Hara H."/>
            <person name="Tanase T.-O."/>
            <person name="Nomura Y."/>
            <person name="Togiya S."/>
            <person name="Komai F."/>
            <person name="Hara R."/>
            <person name="Takeuchi K."/>
            <person name="Arita M."/>
            <person name="Imose N."/>
            <person name="Musashino K."/>
            <person name="Yuuki H."/>
            <person name="Oshima A."/>
            <person name="Sasaki N."/>
            <person name="Aotsuka S."/>
            <person name="Yoshikawa Y."/>
            <person name="Matsunawa H."/>
            <person name="Ichihara T."/>
            <person name="Shiohata N."/>
            <person name="Sano S."/>
            <person name="Moriya S."/>
            <person name="Momiyama H."/>
            <person name="Satoh N."/>
            <person name="Takami S."/>
            <person name="Terashima Y."/>
            <person name="Suzuki O."/>
            <person name="Nakagawa S."/>
            <person name="Senoh A."/>
            <person name="Mizoguchi H."/>
            <person name="Goto Y."/>
            <person name="Shimizu F."/>
            <person name="Wakebe H."/>
            <person name="Hishigaki H."/>
            <person name="Watanabe T."/>
            <person name="Sugiyama A."/>
            <person name="Takemoto M."/>
            <person name="Kawakami B."/>
            <person name="Yamazaki M."/>
            <person name="Watanabe K."/>
            <person name="Kumagai A."/>
            <person name="Itakura S."/>
            <person name="Fukuzumi Y."/>
            <person name="Fujimori Y."/>
            <person name="Komiyama M."/>
            <person name="Tashiro H."/>
            <person name="Tanigami A."/>
            <person name="Fujiwara T."/>
            <person name="Ono T."/>
            <person name="Yamada K."/>
            <person name="Fujii Y."/>
            <person name="Ozaki K."/>
            <person name="Hirao M."/>
            <person name="Ohmori Y."/>
            <person name="Kawabata A."/>
            <person name="Hikiji T."/>
            <person name="Kobatake N."/>
            <person name="Inagaki H."/>
            <person name="Ikema Y."/>
            <person name="Okamoto S."/>
            <person name="Okitani R."/>
            <person name="Kawakami T."/>
            <person name="Noguchi S."/>
            <person name="Itoh T."/>
            <person name="Shigeta K."/>
            <person name="Senba T."/>
            <person name="Matsumura K."/>
            <person name="Nakajima Y."/>
            <person name="Mizuno T."/>
            <person name="Morinaga M."/>
            <person name="Sasaki M."/>
            <person name="Togashi T."/>
            <person name="Oyama M."/>
            <person name="Hata H."/>
            <person name="Watanabe M."/>
            <person name="Komatsu T."/>
            <person name="Mizushima-Sugano J."/>
            <person name="Satoh T."/>
            <person name="Shirai Y."/>
            <person name="Takahashi Y."/>
            <person name="Nakagawa K."/>
            <person name="Okumura K."/>
            <person name="Nagase T."/>
            <person name="Nomura N."/>
            <person name="Kikuchi H."/>
            <person name="Masuho Y."/>
            <person name="Yamashita R."/>
            <person name="Nakai K."/>
            <person name="Yada T."/>
            <person name="Nakamura Y."/>
            <person name="Ohara O."/>
            <person name="Isogai T."/>
            <person name="Sugano S."/>
        </authorList>
    </citation>
    <scope>NUCLEOTIDE SEQUENCE [LARGE SCALE MRNA] (ISOFORM 3)</scope>
    <scope>VARIANT SER-660</scope>
    <source>
        <tissue>Placenta</tissue>
    </source>
</reference>
<reference key="3">
    <citation type="journal article" date="2001" name="Nature">
        <title>The DNA sequence and comparative analysis of human chromosome 20.</title>
        <authorList>
            <person name="Deloukas P."/>
            <person name="Matthews L.H."/>
            <person name="Ashurst J.L."/>
            <person name="Burton J."/>
            <person name="Gilbert J.G.R."/>
            <person name="Jones M."/>
            <person name="Stavrides G."/>
            <person name="Almeida J.P."/>
            <person name="Babbage A.K."/>
            <person name="Bagguley C.L."/>
            <person name="Bailey J."/>
            <person name="Barlow K.F."/>
            <person name="Bates K.N."/>
            <person name="Beard L.M."/>
            <person name="Beare D.M."/>
            <person name="Beasley O.P."/>
            <person name="Bird C.P."/>
            <person name="Blakey S.E."/>
            <person name="Bridgeman A.M."/>
            <person name="Brown A.J."/>
            <person name="Buck D."/>
            <person name="Burrill W.D."/>
            <person name="Butler A.P."/>
            <person name="Carder C."/>
            <person name="Carter N.P."/>
            <person name="Chapman J.C."/>
            <person name="Clamp M."/>
            <person name="Clark G."/>
            <person name="Clark L.N."/>
            <person name="Clark S.Y."/>
            <person name="Clee C.M."/>
            <person name="Clegg S."/>
            <person name="Cobley V.E."/>
            <person name="Collier R.E."/>
            <person name="Connor R.E."/>
            <person name="Corby N.R."/>
            <person name="Coulson A."/>
            <person name="Coville G.J."/>
            <person name="Deadman R."/>
            <person name="Dhami P.D."/>
            <person name="Dunn M."/>
            <person name="Ellington A.G."/>
            <person name="Frankland J.A."/>
            <person name="Fraser A."/>
            <person name="French L."/>
            <person name="Garner P."/>
            <person name="Grafham D.V."/>
            <person name="Griffiths C."/>
            <person name="Griffiths M.N.D."/>
            <person name="Gwilliam R."/>
            <person name="Hall R.E."/>
            <person name="Hammond S."/>
            <person name="Harley J.L."/>
            <person name="Heath P.D."/>
            <person name="Ho S."/>
            <person name="Holden J.L."/>
            <person name="Howden P.J."/>
            <person name="Huckle E."/>
            <person name="Hunt A.R."/>
            <person name="Hunt S.E."/>
            <person name="Jekosch K."/>
            <person name="Johnson C.M."/>
            <person name="Johnson D."/>
            <person name="Kay M.P."/>
            <person name="Kimberley A.M."/>
            <person name="King A."/>
            <person name="Knights A."/>
            <person name="Laird G.K."/>
            <person name="Lawlor S."/>
            <person name="Lehvaeslaiho M.H."/>
            <person name="Leversha M.A."/>
            <person name="Lloyd C."/>
            <person name="Lloyd D.M."/>
            <person name="Lovell J.D."/>
            <person name="Marsh V.L."/>
            <person name="Martin S.L."/>
            <person name="McConnachie L.J."/>
            <person name="McLay K."/>
            <person name="McMurray A.A."/>
            <person name="Milne S.A."/>
            <person name="Mistry D."/>
            <person name="Moore M.J.F."/>
            <person name="Mullikin J.C."/>
            <person name="Nickerson T."/>
            <person name="Oliver K."/>
            <person name="Parker A."/>
            <person name="Patel R."/>
            <person name="Pearce T.A.V."/>
            <person name="Peck A.I."/>
            <person name="Phillimore B.J.C.T."/>
            <person name="Prathalingam S.R."/>
            <person name="Plumb R.W."/>
            <person name="Ramsay H."/>
            <person name="Rice C.M."/>
            <person name="Ross M.T."/>
            <person name="Scott C.E."/>
            <person name="Sehra H.K."/>
            <person name="Shownkeen R."/>
            <person name="Sims S."/>
            <person name="Skuce C.D."/>
            <person name="Smith M.L."/>
            <person name="Soderlund C."/>
            <person name="Steward C.A."/>
            <person name="Sulston J.E."/>
            <person name="Swann R.M."/>
            <person name="Sycamore N."/>
            <person name="Taylor R."/>
            <person name="Tee L."/>
            <person name="Thomas D.W."/>
            <person name="Thorpe A."/>
            <person name="Tracey A."/>
            <person name="Tromans A.C."/>
            <person name="Vaudin M."/>
            <person name="Wall M."/>
            <person name="Wallis J.M."/>
            <person name="Whitehead S.L."/>
            <person name="Whittaker P."/>
            <person name="Willey D.L."/>
            <person name="Williams L."/>
            <person name="Williams S.A."/>
            <person name="Wilming L."/>
            <person name="Wray P.W."/>
            <person name="Hubbard T."/>
            <person name="Durbin R.M."/>
            <person name="Bentley D.R."/>
            <person name="Beck S."/>
            <person name="Rogers J."/>
        </authorList>
    </citation>
    <scope>NUCLEOTIDE SEQUENCE [LARGE SCALE GENOMIC DNA]</scope>
</reference>
<reference key="4">
    <citation type="submission" date="2005-09" db="EMBL/GenBank/DDBJ databases">
        <authorList>
            <person name="Mural R.J."/>
            <person name="Istrail S."/>
            <person name="Sutton G.G."/>
            <person name="Florea L."/>
            <person name="Halpern A.L."/>
            <person name="Mobarry C.M."/>
            <person name="Lippert R."/>
            <person name="Walenz B."/>
            <person name="Shatkay H."/>
            <person name="Dew I."/>
            <person name="Miller J.R."/>
            <person name="Flanigan M.J."/>
            <person name="Edwards N.J."/>
            <person name="Bolanos R."/>
            <person name="Fasulo D."/>
            <person name="Halldorsson B.V."/>
            <person name="Hannenhalli S."/>
            <person name="Turner R."/>
            <person name="Yooseph S."/>
            <person name="Lu F."/>
            <person name="Nusskern D.R."/>
            <person name="Shue B.C."/>
            <person name="Zheng X.H."/>
            <person name="Zhong F."/>
            <person name="Delcher A.L."/>
            <person name="Huson D.H."/>
            <person name="Kravitz S.A."/>
            <person name="Mouchard L."/>
            <person name="Reinert K."/>
            <person name="Remington K.A."/>
            <person name="Clark A.G."/>
            <person name="Waterman M.S."/>
            <person name="Eichler E.E."/>
            <person name="Adams M.D."/>
            <person name="Hunkapiller M.W."/>
            <person name="Myers E.W."/>
            <person name="Venter J.C."/>
        </authorList>
    </citation>
    <scope>NUCLEOTIDE SEQUENCE [LARGE SCALE GENOMIC DNA]</scope>
</reference>
<reference key="5">
    <citation type="journal article" date="2004" name="Genome Res.">
        <title>The status, quality, and expansion of the NIH full-length cDNA project: the Mammalian Gene Collection (MGC).</title>
        <authorList>
            <consortium name="The MGC Project Team"/>
        </authorList>
    </citation>
    <scope>NUCLEOTIDE SEQUENCE [LARGE SCALE MRNA] (ISOFORM 2)</scope>
</reference>
<reference key="6">
    <citation type="journal article" date="2008" name="J. Proteome Res.">
        <title>Phosphoproteome of resting human platelets.</title>
        <authorList>
            <person name="Zahedi R.P."/>
            <person name="Lewandrowski U."/>
            <person name="Wiesner J."/>
            <person name="Wortelkamp S."/>
            <person name="Moebius J."/>
            <person name="Schuetz C."/>
            <person name="Walter U."/>
            <person name="Gambaryan S."/>
            <person name="Sickmann A."/>
        </authorList>
    </citation>
    <scope>PHOSPHORYLATION [LARGE SCALE ANALYSIS] AT SER-200; SER-249 AND SER-305</scope>
    <scope>IDENTIFICATION BY MASS SPECTROMETRY [LARGE SCALE ANALYSIS]</scope>
    <source>
        <tissue>Platelet</tissue>
    </source>
</reference>
<reference key="7">
    <citation type="journal article" date="2008" name="Mol. Biol. Cell">
        <title>A novel Cas family member, HEPL, regulates FAK and cell spreading.</title>
        <authorList>
            <person name="Singh M.K."/>
            <person name="Dadke D."/>
            <person name="Nicolas E."/>
            <person name="Serebriiskii I.G."/>
            <person name="Apostolou S."/>
            <person name="Canutescu A."/>
            <person name="Egleston B.L."/>
            <person name="Golemis E.A."/>
        </authorList>
    </citation>
    <scope>FUNCTION</scope>
    <scope>INTERACTION WITH PTK2/FAK1</scope>
    <scope>SUBCELLULAR LOCATION</scope>
    <scope>TISSUE SPECIFICITY</scope>
    <scope>PHOSPHORYLATION BY SRC</scope>
</reference>
<reference key="8">
    <citation type="journal article" date="2013" name="J. Proteome Res.">
        <title>Toward a comprehensive characterization of a human cancer cell phosphoproteome.</title>
        <authorList>
            <person name="Zhou H."/>
            <person name="Di Palma S."/>
            <person name="Preisinger C."/>
            <person name="Peng M."/>
            <person name="Polat A.N."/>
            <person name="Heck A.J."/>
            <person name="Mohammed S."/>
        </authorList>
    </citation>
    <scope>PHOSPHORYLATION [LARGE SCALE ANALYSIS] AT SER-200; SER-249; SER-305; SER-376 AND SER-390</scope>
    <scope>IDENTIFICATION BY MASS SPECTROMETRY [LARGE SCALE ANALYSIS]</scope>
    <source>
        <tissue>Erythroleukemia</tissue>
    </source>
</reference>
<reference key="9">
    <citation type="submission" date="2005-11" db="PDB data bank">
        <title>Solution structure of RSGI RUH-036, an SH3 domain from human.</title>
        <authorList>
            <consortium name="RIKEN structural genomics initiative (RSGI)"/>
        </authorList>
    </citation>
    <scope>STRUCTURE BY NMR OF 14-71</scope>
</reference>
<feature type="chain" id="PRO_0000079425" description="Cas scaffolding protein family member 4">
    <location>
        <begin position="1"/>
        <end position="786"/>
    </location>
</feature>
<feature type="domain" description="SH3" evidence="1">
    <location>
        <begin position="11"/>
        <end position="73"/>
    </location>
</feature>
<feature type="region of interest" description="Disordered" evidence="2">
    <location>
        <begin position="262"/>
        <end position="295"/>
    </location>
</feature>
<feature type="region of interest" description="Disordered" evidence="2">
    <location>
        <begin position="361"/>
        <end position="429"/>
    </location>
</feature>
<feature type="region of interest" description="Disordered" evidence="2">
    <location>
        <begin position="612"/>
        <end position="670"/>
    </location>
</feature>
<feature type="compositionally biased region" description="Polar residues" evidence="2">
    <location>
        <begin position="273"/>
        <end position="295"/>
    </location>
</feature>
<feature type="compositionally biased region" description="Basic and acidic residues" evidence="2">
    <location>
        <begin position="364"/>
        <end position="373"/>
    </location>
</feature>
<feature type="compositionally biased region" description="Polar residues" evidence="2">
    <location>
        <begin position="374"/>
        <end position="391"/>
    </location>
</feature>
<feature type="compositionally biased region" description="Low complexity" evidence="2">
    <location>
        <begin position="399"/>
        <end position="427"/>
    </location>
</feature>
<feature type="compositionally biased region" description="Basic and acidic residues" evidence="2">
    <location>
        <begin position="630"/>
        <end position="642"/>
    </location>
</feature>
<feature type="modified residue" description="Phosphoserine" evidence="8 9">
    <location>
        <position position="200"/>
    </location>
</feature>
<feature type="modified residue" description="Phosphoserine" evidence="8 9">
    <location>
        <position position="249"/>
    </location>
</feature>
<feature type="modified residue" description="Phosphoserine" evidence="8 9">
    <location>
        <position position="305"/>
    </location>
</feature>
<feature type="modified residue" description="Phosphoserine" evidence="9">
    <location>
        <position position="376"/>
    </location>
</feature>
<feature type="modified residue" description="Phosphoserine" evidence="9">
    <location>
        <position position="390"/>
    </location>
</feature>
<feature type="splice variant" id="VSP_003806" description="In isoform 3." evidence="5">
    <location>
        <begin position="215"/>
        <end position="651"/>
    </location>
</feature>
<feature type="splice variant" id="VSP_003807" description="In isoform 2." evidence="6">
    <original>NPGPLIPQPSSQQTPERKPRLSEHCRLYFGALFKAISAFHGSLSSSQPAEIITQSKLVIMVGQKLVDTLCMETQERDVRNEILRGSSHLCSLLKDVALATKNAVLTYPSPAALGHLQAEAEKLEQHTRQFRGTLG</original>
    <variation>VSSEFQVIEKGASIVTWSSGY</variation>
    <location>
        <begin position="652"/>
        <end position="786"/>
    </location>
</feature>
<feature type="sequence variant" id="VAR_054084" description="In dbSNP:rs16979936.">
    <original>R</original>
    <variation>K</variation>
    <location>
        <position position="491"/>
    </location>
</feature>
<feature type="sequence variant" id="VAR_054085" description="In dbSNP:rs6069755.">
    <original>T</original>
    <variation>N</variation>
    <location>
        <position position="629"/>
    </location>
</feature>
<feature type="sequence variant" id="VAR_054086" description="In dbSNP:rs35031530." evidence="3">
    <original>P</original>
    <variation>S</variation>
    <location>
        <position position="660"/>
    </location>
</feature>
<feature type="sequence variant" id="VAR_054087" description="In dbSNP:rs7272702.">
    <original>Q</original>
    <variation>H</variation>
    <location>
        <position position="780"/>
    </location>
</feature>
<feature type="sequence conflict" description="In Ref. 1; CAC00655." evidence="7" ref="1">
    <original>Y</original>
    <variation>N</variation>
    <location>
        <position position="329"/>
    </location>
</feature>
<feature type="sequence conflict" description="In Ref. 1; CAC00655." evidence="7" ref="1">
    <location>
        <position position="350"/>
    </location>
</feature>
<feature type="sequence conflict" description="In Ref. 1; CAC00655." evidence="7" ref="1">
    <original>E</original>
    <variation>A</variation>
    <location>
        <position position="488"/>
    </location>
</feature>
<feature type="strand" evidence="10">
    <location>
        <begin position="14"/>
        <end position="20"/>
    </location>
</feature>
<feature type="strand" evidence="10">
    <location>
        <begin position="25"/>
        <end position="29"/>
    </location>
</feature>
<feature type="strand" evidence="10">
    <location>
        <begin position="38"/>
        <end position="43"/>
    </location>
</feature>
<feature type="strand" evidence="10">
    <location>
        <begin position="51"/>
        <end position="58"/>
    </location>
</feature>
<feature type="strand" evidence="10">
    <location>
        <begin position="61"/>
        <end position="64"/>
    </location>
</feature>
<feature type="turn" evidence="10">
    <location>
        <begin position="65"/>
        <end position="67"/>
    </location>
</feature>
<feature type="strand" evidence="10">
    <location>
        <begin position="68"/>
        <end position="70"/>
    </location>
</feature>
<evidence type="ECO:0000255" key="1">
    <source>
        <dbReference type="PROSITE-ProRule" id="PRU00192"/>
    </source>
</evidence>
<evidence type="ECO:0000256" key="2">
    <source>
        <dbReference type="SAM" id="MobiDB-lite"/>
    </source>
</evidence>
<evidence type="ECO:0000269" key="3">
    <source>
    </source>
</evidence>
<evidence type="ECO:0000269" key="4">
    <source>
    </source>
</evidence>
<evidence type="ECO:0000303" key="5">
    <source>
    </source>
</evidence>
<evidence type="ECO:0000303" key="6">
    <source>
    </source>
</evidence>
<evidence type="ECO:0000305" key="7"/>
<evidence type="ECO:0007744" key="8">
    <source>
    </source>
</evidence>
<evidence type="ECO:0007744" key="9">
    <source>
    </source>
</evidence>
<evidence type="ECO:0007829" key="10">
    <source>
        <dbReference type="PDB" id="2CRE"/>
    </source>
</evidence>
<name>CASS4_HUMAN</name>
<organism>
    <name type="scientific">Homo sapiens</name>
    <name type="common">Human</name>
    <dbReference type="NCBI Taxonomy" id="9606"/>
    <lineage>
        <taxon>Eukaryota</taxon>
        <taxon>Metazoa</taxon>
        <taxon>Chordata</taxon>
        <taxon>Craniata</taxon>
        <taxon>Vertebrata</taxon>
        <taxon>Euteleostomi</taxon>
        <taxon>Mammalia</taxon>
        <taxon>Eutheria</taxon>
        <taxon>Euarchontoglires</taxon>
        <taxon>Primates</taxon>
        <taxon>Haplorrhini</taxon>
        <taxon>Catarrhini</taxon>
        <taxon>Hominidae</taxon>
        <taxon>Homo</taxon>
    </lineage>
</organism>
<gene>
    <name type="primary">CASS4</name>
    <name type="synonym">C20orf32</name>
    <name type="synonym">HEFL</name>
</gene>
<protein>
    <recommendedName>
        <fullName>Cas scaffolding protein family member 4</fullName>
    </recommendedName>
    <alternativeName>
        <fullName>HEF-like protein</fullName>
    </alternativeName>
    <alternativeName>
        <fullName>HEF1-EFS-p130Cas-like protein</fullName>
        <shortName>HEPL</shortName>
    </alternativeName>
</protein>
<sequence>MKGTGIMDCAPKALLARALYDNCPDCSDELAFSRGDILTILEQHVPESEGWWKCLLHGRQGLAPANRLQILTEVAADRPCPPFLRGLEEAPASSEETYQVPTLPRPPTPGPVYEQMRSWAEGPQPPTAQVYEFPDPPTSARIICEKTLSFPKQAILTLPRPVRASLPTLPSQVYDVPTQHRGPVVLKEPEKQQLYDIPASPKKAGLHPPDSQASGQGVPLISVTTLRRGGYSTLPNPQKSEWIYDTPVSPGKASVRNTPLTSFAEESRPHALPSSSSTFYNPPSGRSRSLTPQLNNNVPMQKKLSLPEIPSYGFLVPRGTFPLDEDVSYKVPSSFLIPRVEQQNTKPNIYDIPKATSSVSQAGKELEKAKEVSENSAGHNSSWFSRRTTSPSPEPDRLSGSSSDSRASIVSSCSTTSTDDSSSSSSEESAKELSLDLDVAKETVMALQHKVVSSVAGLMLFVSRKWRFRDYLEANIDAIHRSTDHIEESVREFLDFARGVHGTACNLTDSNLQNRIRDQMQTISNSYRILLETKESLDNRNWPLEVLVTDSVQNSPDDLERFVMVARMLPEDIKRFASIVIANGRLLFKRNCEKEETVQLTPNAEFKCEKYIQPPQRETESHQKSTPSTKQREDEHSSELLKKNRANICGQNPGPLIPQPSSQQTPERKPRLSEHCRLYFGALFKAISAFHGSLSSSQPAEIITQSKLVIMVGQKLVDTLCMETQERDVRNEILRGSSHLCSLLKDVALATKNAVLTYPSPAALGHLQAEAEKLEQHTRQFRGTLG</sequence>
<dbReference type="EMBL" id="AJ276678">
    <property type="protein sequence ID" value="CAC00655.1"/>
    <property type="status" value="ALT_FRAME"/>
    <property type="molecule type" value="mRNA"/>
</dbReference>
<dbReference type="EMBL" id="AK027760">
    <property type="protein sequence ID" value="BAB55351.1"/>
    <property type="molecule type" value="mRNA"/>
</dbReference>
<dbReference type="EMBL" id="AL121914">
    <property type="status" value="NOT_ANNOTATED_CDS"/>
    <property type="molecule type" value="Genomic_DNA"/>
</dbReference>
<dbReference type="EMBL" id="CH471077">
    <property type="protein sequence ID" value="EAW75546.1"/>
    <property type="molecule type" value="Genomic_DNA"/>
</dbReference>
<dbReference type="EMBL" id="CH471077">
    <property type="protein sequence ID" value="EAW75547.1"/>
    <property type="molecule type" value="Genomic_DNA"/>
</dbReference>
<dbReference type="EMBL" id="BC027951">
    <property type="protein sequence ID" value="AAH27951.1"/>
    <property type="molecule type" value="mRNA"/>
</dbReference>
<dbReference type="CCDS" id="CCDS33492.1">
    <molecule id="Q9NQ75-1"/>
</dbReference>
<dbReference type="CCDS" id="CCDS54475.1">
    <molecule id="Q9NQ75-3"/>
</dbReference>
<dbReference type="RefSeq" id="NP_001157586.1">
    <property type="nucleotide sequence ID" value="NM_001164114.1"/>
</dbReference>
<dbReference type="RefSeq" id="NP_001157587.1">
    <molecule id="Q9NQ75-3"/>
    <property type="nucleotide sequence ID" value="NM_001164115.2"/>
</dbReference>
<dbReference type="RefSeq" id="NP_001157588.1">
    <molecule id="Q9NQ75-1"/>
    <property type="nucleotide sequence ID" value="NM_001164116.2"/>
</dbReference>
<dbReference type="RefSeq" id="NP_065089.2">
    <molecule id="Q9NQ75-1"/>
    <property type="nucleotide sequence ID" value="NM_020356.4"/>
</dbReference>
<dbReference type="PDB" id="2CRE">
    <property type="method" value="NMR"/>
    <property type="chains" value="A=14-71"/>
</dbReference>
<dbReference type="PDBsum" id="2CRE"/>
<dbReference type="SMR" id="Q9NQ75"/>
<dbReference type="BioGRID" id="121359">
    <property type="interactions" value="9"/>
</dbReference>
<dbReference type="FunCoup" id="Q9NQ75">
    <property type="interactions" value="223"/>
</dbReference>
<dbReference type="IntAct" id="Q9NQ75">
    <property type="interactions" value="37"/>
</dbReference>
<dbReference type="STRING" id="9606.ENSP00000353462"/>
<dbReference type="GlyGen" id="Q9NQ75">
    <property type="glycosylation" value="2 sites, 1 O-linked glycan (1 site)"/>
</dbReference>
<dbReference type="iPTMnet" id="Q9NQ75"/>
<dbReference type="PhosphoSitePlus" id="Q9NQ75"/>
<dbReference type="BioMuta" id="CASS4"/>
<dbReference type="DMDM" id="23813906"/>
<dbReference type="MassIVE" id="Q9NQ75"/>
<dbReference type="PaxDb" id="9606-ENSP00000353462"/>
<dbReference type="PeptideAtlas" id="Q9NQ75"/>
<dbReference type="ProteomicsDB" id="82093">
    <molecule id="Q9NQ75-1"/>
</dbReference>
<dbReference type="ProteomicsDB" id="82094">
    <molecule id="Q9NQ75-2"/>
</dbReference>
<dbReference type="ProteomicsDB" id="82095">
    <molecule id="Q9NQ75-3"/>
</dbReference>
<dbReference type="ABCD" id="Q9NQ75">
    <property type="antibodies" value="2 sequenced antibodies"/>
</dbReference>
<dbReference type="Antibodypedia" id="2766">
    <property type="antibodies" value="79 antibodies from 19 providers"/>
</dbReference>
<dbReference type="DNASU" id="57091"/>
<dbReference type="Ensembl" id="ENST00000360314.7">
    <molecule id="Q9NQ75-1"/>
    <property type="protein sequence ID" value="ENSP00000353462.3"/>
    <property type="gene ID" value="ENSG00000087589.17"/>
</dbReference>
<dbReference type="Ensembl" id="ENST00000434344.2">
    <molecule id="Q9NQ75-3"/>
    <property type="protein sequence ID" value="ENSP00000410027.1"/>
    <property type="gene ID" value="ENSG00000087589.17"/>
</dbReference>
<dbReference type="Ensembl" id="ENST00000679887.1">
    <molecule id="Q9NQ75-1"/>
    <property type="protein sequence ID" value="ENSP00000506506.1"/>
    <property type="gene ID" value="ENSG00000087589.17"/>
</dbReference>
<dbReference type="GeneID" id="57091"/>
<dbReference type="KEGG" id="hsa:57091"/>
<dbReference type="MANE-Select" id="ENST00000679887.1">
    <property type="protein sequence ID" value="ENSP00000506506.1"/>
    <property type="RefSeq nucleotide sequence ID" value="NM_020356.4"/>
    <property type="RefSeq protein sequence ID" value="NP_065089.2"/>
</dbReference>
<dbReference type="UCSC" id="uc002xxp.3">
    <molecule id="Q9NQ75-1"/>
    <property type="organism name" value="human"/>
</dbReference>
<dbReference type="AGR" id="HGNC:15878"/>
<dbReference type="CTD" id="57091"/>
<dbReference type="DisGeNET" id="57091"/>
<dbReference type="GeneCards" id="CASS4"/>
<dbReference type="HGNC" id="HGNC:15878">
    <property type="gene designation" value="CASS4"/>
</dbReference>
<dbReference type="HPA" id="ENSG00000087589">
    <property type="expression patterns" value="Tissue enhanced (lung, lymphoid tissue)"/>
</dbReference>
<dbReference type="MIM" id="618888">
    <property type="type" value="gene"/>
</dbReference>
<dbReference type="neXtProt" id="NX_Q9NQ75"/>
<dbReference type="NIAGADS" id="ENSG00000087589"/>
<dbReference type="OpenTargets" id="ENSG00000087589"/>
<dbReference type="PharmGKB" id="PA162381095"/>
<dbReference type="VEuPathDB" id="HostDB:ENSG00000087589"/>
<dbReference type="eggNOG" id="ENOG502QUJM">
    <property type="taxonomic scope" value="Eukaryota"/>
</dbReference>
<dbReference type="GeneTree" id="ENSGT00950000183008"/>
<dbReference type="HOGENOM" id="CLU_017000_0_1_1"/>
<dbReference type="InParanoid" id="Q9NQ75"/>
<dbReference type="OMA" id="TYERMDM"/>
<dbReference type="OrthoDB" id="5983572at2759"/>
<dbReference type="PAN-GO" id="Q9NQ75">
    <property type="GO annotations" value="5 GO annotations based on evolutionary models"/>
</dbReference>
<dbReference type="PhylomeDB" id="Q9NQ75"/>
<dbReference type="TreeFam" id="TF328782"/>
<dbReference type="PathwayCommons" id="Q9NQ75"/>
<dbReference type="SignaLink" id="Q9NQ75"/>
<dbReference type="BioGRID-ORCS" id="57091">
    <property type="hits" value="16 hits in 1151 CRISPR screens"/>
</dbReference>
<dbReference type="ChiTaRS" id="CASS4">
    <property type="organism name" value="human"/>
</dbReference>
<dbReference type="EvolutionaryTrace" id="Q9NQ75"/>
<dbReference type="GenomeRNAi" id="57091"/>
<dbReference type="Pharos" id="Q9NQ75">
    <property type="development level" value="Tbio"/>
</dbReference>
<dbReference type="PRO" id="PR:Q9NQ75"/>
<dbReference type="Proteomes" id="UP000005640">
    <property type="component" value="Chromosome 20"/>
</dbReference>
<dbReference type="RNAct" id="Q9NQ75">
    <property type="molecule type" value="protein"/>
</dbReference>
<dbReference type="Bgee" id="ENSG00000087589">
    <property type="expression patterns" value="Expressed in upper lobe of left lung and 96 other cell types or tissues"/>
</dbReference>
<dbReference type="ExpressionAtlas" id="Q9NQ75">
    <property type="expression patterns" value="baseline and differential"/>
</dbReference>
<dbReference type="GO" id="GO:0005737">
    <property type="term" value="C:cytoplasm"/>
    <property type="evidence" value="ECO:0000314"/>
    <property type="project" value="ARUK-UCL"/>
</dbReference>
<dbReference type="GO" id="GO:0005856">
    <property type="term" value="C:cytoskeleton"/>
    <property type="evidence" value="ECO:0007669"/>
    <property type="project" value="UniProtKB-SubCell"/>
</dbReference>
<dbReference type="GO" id="GO:0005925">
    <property type="term" value="C:focal adhesion"/>
    <property type="evidence" value="ECO:0000314"/>
    <property type="project" value="UniProtKB"/>
</dbReference>
<dbReference type="GO" id="GO:1990782">
    <property type="term" value="F:protein tyrosine kinase binding"/>
    <property type="evidence" value="ECO:0000353"/>
    <property type="project" value="UniProtKB"/>
</dbReference>
<dbReference type="GO" id="GO:0007155">
    <property type="term" value="P:cell adhesion"/>
    <property type="evidence" value="ECO:0007669"/>
    <property type="project" value="UniProtKB-KW"/>
</dbReference>
<dbReference type="GO" id="GO:0016477">
    <property type="term" value="P:cell migration"/>
    <property type="evidence" value="ECO:0000318"/>
    <property type="project" value="GO_Central"/>
</dbReference>
<dbReference type="GO" id="GO:0007169">
    <property type="term" value="P:cell surface receptor protein tyrosine kinase signaling pathway"/>
    <property type="evidence" value="ECO:0000318"/>
    <property type="project" value="GO_Central"/>
</dbReference>
<dbReference type="GO" id="GO:0030335">
    <property type="term" value="P:positive regulation of cell migration"/>
    <property type="evidence" value="ECO:0000315"/>
    <property type="project" value="UniProtKB"/>
</dbReference>
<dbReference type="GO" id="GO:0051897">
    <property type="term" value="P:positive regulation of phosphatidylinositol 3-kinase/protein kinase B signal transduction"/>
    <property type="evidence" value="ECO:0000315"/>
    <property type="project" value="ARUK-UCL"/>
</dbReference>
<dbReference type="GO" id="GO:0061098">
    <property type="term" value="P:positive regulation of protein tyrosine kinase activity"/>
    <property type="evidence" value="ECO:0000314"/>
    <property type="project" value="UniProtKB"/>
</dbReference>
<dbReference type="GO" id="GO:1900026">
    <property type="term" value="P:positive regulation of substrate adhesion-dependent cell spreading"/>
    <property type="evidence" value="ECO:0000315"/>
    <property type="project" value="UniProtKB"/>
</dbReference>
<dbReference type="CDD" id="cd11568">
    <property type="entry name" value="FAT-like_CASS4_C"/>
    <property type="match status" value="1"/>
</dbReference>
<dbReference type="CDD" id="cd11551">
    <property type="entry name" value="Serine_rich_CASS4"/>
    <property type="match status" value="1"/>
</dbReference>
<dbReference type="CDD" id="cd12000">
    <property type="entry name" value="SH3_CASS4"/>
    <property type="match status" value="1"/>
</dbReference>
<dbReference type="FunFam" id="1.20.120.830:FF:000001">
    <property type="entry name" value="BCAR1 scaffold protein, Cas family member"/>
    <property type="match status" value="1"/>
</dbReference>
<dbReference type="FunFam" id="1.20.120.230:FF:000015">
    <property type="entry name" value="Cas scaffold protein family member 4"/>
    <property type="match status" value="1"/>
</dbReference>
<dbReference type="FunFam" id="2.30.30.40:FF:000147">
    <property type="entry name" value="Cas scaffold protein family member 4"/>
    <property type="match status" value="1"/>
</dbReference>
<dbReference type="Gene3D" id="1.20.120.230">
    <property type="entry name" value="Alpha-catenin/vinculin-like"/>
    <property type="match status" value="1"/>
</dbReference>
<dbReference type="Gene3D" id="1.20.120.830">
    <property type="entry name" value="Serine-rich domain"/>
    <property type="match status" value="1"/>
</dbReference>
<dbReference type="Gene3D" id="2.30.30.40">
    <property type="entry name" value="SH3 Domains"/>
    <property type="match status" value="1"/>
</dbReference>
<dbReference type="InterPro" id="IPR021901">
    <property type="entry name" value="CAS_C"/>
</dbReference>
<dbReference type="InterPro" id="IPR037362">
    <property type="entry name" value="CAS_fam"/>
</dbReference>
<dbReference type="InterPro" id="IPR035744">
    <property type="entry name" value="CASS4_SH3"/>
</dbReference>
<dbReference type="InterPro" id="IPR014928">
    <property type="entry name" value="Serine_rich_dom"/>
</dbReference>
<dbReference type="InterPro" id="IPR038319">
    <property type="entry name" value="Serine_rich_sf"/>
</dbReference>
<dbReference type="InterPro" id="IPR036028">
    <property type="entry name" value="SH3-like_dom_sf"/>
</dbReference>
<dbReference type="InterPro" id="IPR001452">
    <property type="entry name" value="SH3_domain"/>
</dbReference>
<dbReference type="PANTHER" id="PTHR10654">
    <property type="entry name" value="CAS SCAFFOLDING PROTEIN"/>
    <property type="match status" value="1"/>
</dbReference>
<dbReference type="PANTHER" id="PTHR10654:SF19">
    <property type="entry name" value="CAS SCAFFOLDING PROTEIN FAMILY MEMBER 4"/>
    <property type="match status" value="1"/>
</dbReference>
<dbReference type="Pfam" id="PF12026">
    <property type="entry name" value="CAS_C"/>
    <property type="match status" value="1"/>
</dbReference>
<dbReference type="Pfam" id="PF08824">
    <property type="entry name" value="Serine_rich"/>
    <property type="match status" value="1"/>
</dbReference>
<dbReference type="Pfam" id="PF14604">
    <property type="entry name" value="SH3_9"/>
    <property type="match status" value="1"/>
</dbReference>
<dbReference type="SMART" id="SM00326">
    <property type="entry name" value="SH3"/>
    <property type="match status" value="1"/>
</dbReference>
<dbReference type="SUPFAM" id="SSF50044">
    <property type="entry name" value="SH3-domain"/>
    <property type="match status" value="1"/>
</dbReference>
<dbReference type="PROSITE" id="PS50002">
    <property type="entry name" value="SH3"/>
    <property type="match status" value="1"/>
</dbReference>
<accession>Q9NQ75</accession>
<accession>E1P5Z8</accession>
<accession>Q5QPD6</accession>
<accession>Q96K09</accession>
<accession>Q9BYL5</accession>